<accession>C0REB5</accession>
<protein>
    <recommendedName>
        <fullName evidence="1">UPF0260 protein BMEA_A1529</fullName>
    </recommendedName>
</protein>
<organism>
    <name type="scientific">Brucella melitensis biotype 2 (strain ATCC 23457)</name>
    <dbReference type="NCBI Taxonomy" id="546272"/>
    <lineage>
        <taxon>Bacteria</taxon>
        <taxon>Pseudomonadati</taxon>
        <taxon>Pseudomonadota</taxon>
        <taxon>Alphaproteobacteria</taxon>
        <taxon>Hyphomicrobiales</taxon>
        <taxon>Brucellaceae</taxon>
        <taxon>Brucella/Ochrobactrum group</taxon>
        <taxon>Brucella</taxon>
    </lineage>
</organism>
<feature type="chain" id="PRO_1000147697" description="UPF0260 protein BMEA_A1529">
    <location>
        <begin position="1"/>
        <end position="152"/>
    </location>
</feature>
<sequence>MTDKPFWQTKNLNQLTRSEWESLCDGCGQCCLHKLQDEDTDEIYWTSVACTLLNPETCQCRDYPNRKKTVPDCIFLTPEIVDEVDWLPVTCAYRLVAEGSDLYWWHPLVSGSPETVHEAGISVRGKVTAFDHDMQDDDDYLDHMVTPDKIAR</sequence>
<name>Y1529_BRUMB</name>
<proteinExistence type="inferred from homology"/>
<comment type="similarity">
    <text evidence="1">Belongs to the UPF0260 family.</text>
</comment>
<evidence type="ECO:0000255" key="1">
    <source>
        <dbReference type="HAMAP-Rule" id="MF_00676"/>
    </source>
</evidence>
<reference key="1">
    <citation type="submission" date="2009-03" db="EMBL/GenBank/DDBJ databases">
        <title>Brucella melitensis ATCC 23457 whole genome shotgun sequencing project.</title>
        <authorList>
            <person name="Setubal J.C."/>
            <person name="Boyle S."/>
            <person name="Crasta O.R."/>
            <person name="Gillespie J.J."/>
            <person name="Kenyon R.W."/>
            <person name="Lu J."/>
            <person name="Mane S."/>
            <person name="Nagrani S."/>
            <person name="Shallom J.M."/>
            <person name="Shallom S."/>
            <person name="Shukla M."/>
            <person name="Snyder E.E."/>
            <person name="Sobral B.W."/>
            <person name="Wattam A.R."/>
            <person name="Will R."/>
            <person name="Williams K."/>
            <person name="Yoo H."/>
            <person name="Munk C."/>
            <person name="Tapia R."/>
            <person name="Han C."/>
            <person name="Detter J.C."/>
            <person name="Bruce D."/>
            <person name="Brettin T.S."/>
        </authorList>
    </citation>
    <scope>NUCLEOTIDE SEQUENCE [LARGE SCALE GENOMIC DNA]</scope>
    <source>
        <strain>ATCC 23457</strain>
    </source>
</reference>
<gene>
    <name type="ordered locus">BMEA_A1529</name>
</gene>
<dbReference type="EMBL" id="CP001488">
    <property type="protein sequence ID" value="ACO01237.1"/>
    <property type="molecule type" value="Genomic_DNA"/>
</dbReference>
<dbReference type="RefSeq" id="WP_002964583.1">
    <property type="nucleotide sequence ID" value="NC_012441.1"/>
</dbReference>
<dbReference type="KEGG" id="bmi:BMEA_A1529"/>
<dbReference type="HOGENOM" id="CLU_109769_0_1_5"/>
<dbReference type="Proteomes" id="UP000001748">
    <property type="component" value="Chromosome I"/>
</dbReference>
<dbReference type="HAMAP" id="MF_00676">
    <property type="entry name" value="UPF0260"/>
    <property type="match status" value="1"/>
</dbReference>
<dbReference type="InterPro" id="IPR005358">
    <property type="entry name" value="Puta_zinc/iron-chelating_dom"/>
</dbReference>
<dbReference type="InterPro" id="IPR008228">
    <property type="entry name" value="UCP006173"/>
</dbReference>
<dbReference type="NCBIfam" id="NF003501">
    <property type="entry name" value="PRK05170.1-5"/>
    <property type="match status" value="1"/>
</dbReference>
<dbReference type="NCBIfam" id="NF003507">
    <property type="entry name" value="PRK05170.2-5"/>
    <property type="match status" value="1"/>
</dbReference>
<dbReference type="PANTHER" id="PTHR37421">
    <property type="entry name" value="UPF0260 PROTEIN YCGN"/>
    <property type="match status" value="1"/>
</dbReference>
<dbReference type="PANTHER" id="PTHR37421:SF1">
    <property type="entry name" value="UPF0260 PROTEIN YCGN"/>
    <property type="match status" value="1"/>
</dbReference>
<dbReference type="Pfam" id="PF03692">
    <property type="entry name" value="CxxCxxCC"/>
    <property type="match status" value="1"/>
</dbReference>
<dbReference type="PIRSF" id="PIRSF006173">
    <property type="entry name" value="UCP006173"/>
    <property type="match status" value="1"/>
</dbReference>